<dbReference type="EMBL" id="EF583018">
    <property type="protein sequence ID" value="ABU87827.1"/>
    <property type="molecule type" value="Genomic_RNA"/>
</dbReference>
<dbReference type="SMR" id="B1NKR0"/>
<dbReference type="Proteomes" id="UP000001456">
    <property type="component" value="Genome"/>
</dbReference>
<dbReference type="GO" id="GO:0039616">
    <property type="term" value="C:T=2 icosahedral viral capsid"/>
    <property type="evidence" value="ECO:0007669"/>
    <property type="project" value="UniProtKB-UniRule"/>
</dbReference>
<dbReference type="GO" id="GO:0039625">
    <property type="term" value="C:viral inner capsid"/>
    <property type="evidence" value="ECO:0007669"/>
    <property type="project" value="UniProtKB-UniRule"/>
</dbReference>
<dbReference type="GO" id="GO:0019013">
    <property type="term" value="C:viral nucleocapsid"/>
    <property type="evidence" value="ECO:0007669"/>
    <property type="project" value="UniProtKB-UniRule"/>
</dbReference>
<dbReference type="GO" id="GO:0003723">
    <property type="term" value="F:RNA binding"/>
    <property type="evidence" value="ECO:0007669"/>
    <property type="project" value="UniProtKB-UniRule"/>
</dbReference>
<dbReference type="HAMAP" id="MF_04123">
    <property type="entry name" value="Rota_VP2"/>
    <property type="match status" value="1"/>
</dbReference>
<dbReference type="HAMAP" id="MF_04127">
    <property type="entry name" value="Rota_VP2_A"/>
    <property type="match status" value="1"/>
</dbReference>
<dbReference type="InterPro" id="IPR007779">
    <property type="entry name" value="Rotavirus_VP2"/>
</dbReference>
<dbReference type="Pfam" id="PF05087">
    <property type="entry name" value="Rota_VP2"/>
    <property type="match status" value="1"/>
</dbReference>
<sequence length="880" mass="102471">MAYRKRGARREANVNNNDRMQEKDDEKQDQNSKMQLSDKVLSKKEEVITDNQEEVKIADEVKKSTKEESKQLLEVLKTKEEHQKEIQYEILQKTIPTFEPKESILKKLEDIKPEQAKKQTKLFRIFEPRQLPIYRANGEKELRNRWYWKLKKDTLPDGDYDVREYFLNLYDQVLTEMPDYLLLKDMAVENKNSRDAGKVVDSETASICDAIFQDEETEGAVRRFIAEMRQRVQADRNVVNYPSILHPIDYAFNEYFLQHQLVEPLNNDIIFNYIPERIRNDVNYILNMDRNLPSTARYIRPNLLQDRLNLHDNFESLWDTITTSNYILARSVVPDLKELVSTEAQIQKMSQDLQLEALTIQSETQFLTGINSQAANDCFKTLIAAMLSQRTMSLDFVTTNYMSLISGMWLLTVVPNDMFIRESLVACQLAIVNTIVYPAFGMQRMHYRNGDPQTPFQIAEQQIQNFQVANWLHFVNNNQFRQVVIDGVLNQVLNDNIRNGHVINQLMEALMQLSRQQFPTMPVDYKRSIQRGILLLSNRLGQLVDLTRLLAYNYETLMACITMNMQHVQTLTTEKLQLTSVTSLCMLIGNATVIPSPQTLFHYYNVNVNFHSNYNERINDAVAIITAANRLNLYQKKMKSIVEDFLKRLHIFDVARVPDDQMYRLRDRLRLLPVEVRRLDIFNLILMNMDQIERASDKIAQGVIIAYRDMQLERDEMYGYVNIARNLDGFQQINLEELMRTGDYAQITNMLLNNQPVALVGALPFITDSSVISLIAKLDATVFAQIVKLRKVDTLKPILYKINSDSNDFYLVANYDWVPTSTTKVYKQVPQQFDFRNSMHMLTSNLTFTVYSDLLAFVSADTVEPINAVAFDNMRIMNEL</sequence>
<accession>B1NKR0</accession>
<proteinExistence type="inferred from homology"/>
<comment type="function">
    <text evidence="1">Inner capsid protein that self-assembles to form an icosahedral capsid with a T=2 symmetry, which consists of 120 copies of VP2, with channels at each of its five-fold vertices. This capsid constitutes the innermost concentric layer of the viral mature particle. It encapsidates the polymerase VP1, the capping enzyme VP3 and the genomic dsRNA, thereby defining the core. The innermost VP2 capsid and the intermediate VP6 capsid remain intact following cell entry to protect the dsRNA from degradation and to prevent unfavorable antiviral responses in the host cell during all the replication cycle of the virus. Nascent transcripts are transcribed within the structural confines of this double-layered particle (DLP) and are extruded through the channels formed by VP2 N-termini. VP2 is required for the replicase activity of VP1 polymerase. Probably recruits a copy of a VP1-VP3 complex, potentially along with a segment of plus-strand RNA, as a decamer of VP2 assembles. May activate the autoinhibited VP1/RNA complex to coordinate packaging and genome replication.</text>
</comment>
<comment type="subunit">
    <text evidence="1">Homodecamer; each decamer is made up of two conformers of VP2, called VP2A and VP2B. Interacts with a VP1-VP3 complex. Interacts with the intermediate capsid protein VP6. Interacts with NSP5. Interacts (via N-terminus) with NSP2.</text>
</comment>
<comment type="subcellular location">
    <subcellularLocation>
        <location evidence="1">Virion</location>
    </subcellularLocation>
    <text evidence="1">Inner capsid protein. Also found in spherical cytoplasmic structures, called virus factories, that appear early after infection and are the site of viral replication and packaging.</text>
</comment>
<comment type="domain">
    <text evidence="1">The N-terminus binds RNA. It is necessary for encapsidation of VP1 and VP3. The N-termini of 10 VP2 molecules form a cylindrical hub underneath each 5-fold axis of the inner capsid.</text>
</comment>
<comment type="PTM">
    <text evidence="1">Sumoylated with SUMO1 and SUMO2. Sumoylation of viral proteins seems to have a positive role on viral replication.</text>
</comment>
<comment type="similarity">
    <text evidence="1">Belongs to the rotavirus VP2 family.</text>
</comment>
<feature type="chain" id="PRO_0000368050" description="Inner capsid protein VP2">
    <location>
        <begin position="1"/>
        <end position="880"/>
    </location>
</feature>
<feature type="region of interest" description="5-fold hub; involved in the encapsidation of VP1 and VP3" evidence="1">
    <location>
        <begin position="1"/>
        <end position="80"/>
    </location>
</feature>
<feature type="region of interest" description="Disordered" evidence="2">
    <location>
        <begin position="1"/>
        <end position="45"/>
    </location>
</feature>
<feature type="region of interest" description="Hydrophobic" evidence="1">
    <location>
        <begin position="394"/>
        <end position="414"/>
    </location>
</feature>
<feature type="region of interest" description="Hydrophobic" evidence="1">
    <location>
        <begin position="422"/>
        <end position="442"/>
    </location>
</feature>
<feature type="compositionally biased region" description="Basic and acidic residues" evidence="2">
    <location>
        <begin position="19"/>
        <end position="30"/>
    </location>
</feature>
<feature type="site" description="Interaction with the intermediate capsid protein VP6" evidence="1">
    <location>
        <position position="220"/>
    </location>
</feature>
<feature type="site" description="Interaction with the intermediate capsid protein VP6" evidence="1">
    <location>
        <position position="224"/>
    </location>
</feature>
<feature type="site" description="Interaction with the intermediate capsid protein VP6" evidence="1">
    <location>
        <position position="228"/>
    </location>
</feature>
<feature type="site" description="Interaction with the intermediate capsid protein VP6" evidence="1">
    <location>
        <position position="839"/>
    </location>
</feature>
<feature type="site" description="Interaction with the intermediate capsid protein VP6" evidence="1">
    <location>
        <position position="841"/>
    </location>
</feature>
<evidence type="ECO:0000255" key="1">
    <source>
        <dbReference type="HAMAP-Rule" id="MF_04127"/>
    </source>
</evidence>
<evidence type="ECO:0000256" key="2">
    <source>
        <dbReference type="SAM" id="MobiDB-lite"/>
    </source>
</evidence>
<reference key="1">
    <citation type="journal article" date="2008" name="J. Virol.">
        <title>Full genome-based classification of rotaviruses reveals a common origin between human Wa-Like and porcine rotavirus strains and human DS-1-like and bovine rotavirus strains.</title>
        <authorList>
            <person name="Matthijnssens J."/>
            <person name="Ciarlet M."/>
            <person name="Heiman E.M."/>
            <person name="Arijs I."/>
            <person name="Delbeke T."/>
            <person name="McDonald S.M."/>
            <person name="Palombo E.A."/>
            <person name="Iturriza-Gomara M."/>
            <person name="Maes P."/>
            <person name="Patton J.T."/>
            <person name="Rahman M."/>
            <person name="Van Ranst M."/>
        </authorList>
    </citation>
    <scope>NUCLEOTIDE SEQUENCE [GENOMIC RNA]</scope>
</reference>
<keyword id="KW-0167">Capsid protein</keyword>
<keyword id="KW-1153">Inner capsid protein</keyword>
<keyword id="KW-0677">Repeat</keyword>
<keyword id="KW-0694">RNA-binding</keyword>
<keyword id="KW-1141">T=2 icosahedral capsid protein</keyword>
<keyword id="KW-0832">Ubl conjugation</keyword>
<keyword id="KW-0946">Virion</keyword>
<organismHost>
    <name type="scientific">Homo sapiens</name>
    <name type="common">Human</name>
    <dbReference type="NCBI Taxonomy" id="9606"/>
</organismHost>
<organism>
    <name type="scientific">Rotavirus A (isolate RVA/Human/United Kingdom/A64/1987/G10P11[14])</name>
    <name type="common">RV-A</name>
    <dbReference type="NCBI Taxonomy" id="578827"/>
    <lineage>
        <taxon>Viruses</taxon>
        <taxon>Riboviria</taxon>
        <taxon>Orthornavirae</taxon>
        <taxon>Duplornaviricota</taxon>
        <taxon>Resentoviricetes</taxon>
        <taxon>Reovirales</taxon>
        <taxon>Sedoreoviridae</taxon>
        <taxon>Rotavirus</taxon>
        <taxon>Rotavirus A</taxon>
    </lineage>
</organism>
<protein>
    <recommendedName>
        <fullName evidence="1">Inner capsid protein VP2</fullName>
    </recommendedName>
</protein>
<name>VP2_ROTH7</name>